<accession>Q03KS5</accession>
<comment type="function">
    <text evidence="1">Catalyzes the transfer of a ribosyl phosphate group from 5-phosphoribose 1-diphosphate to orotate, leading to the formation of orotidine monophosphate (OMP).</text>
</comment>
<comment type="catalytic activity">
    <reaction evidence="1">
        <text>orotidine 5'-phosphate + diphosphate = orotate + 5-phospho-alpha-D-ribose 1-diphosphate</text>
        <dbReference type="Rhea" id="RHEA:10380"/>
        <dbReference type="ChEBI" id="CHEBI:30839"/>
        <dbReference type="ChEBI" id="CHEBI:33019"/>
        <dbReference type="ChEBI" id="CHEBI:57538"/>
        <dbReference type="ChEBI" id="CHEBI:58017"/>
        <dbReference type="EC" id="2.4.2.10"/>
    </reaction>
</comment>
<comment type="cofactor">
    <cofactor evidence="1">
        <name>Mg(2+)</name>
        <dbReference type="ChEBI" id="CHEBI:18420"/>
    </cofactor>
</comment>
<comment type="pathway">
    <text evidence="1">Pyrimidine metabolism; UMP biosynthesis via de novo pathway; UMP from orotate: step 1/2.</text>
</comment>
<comment type="subunit">
    <text evidence="1">Homodimer.</text>
</comment>
<comment type="similarity">
    <text evidence="1">Belongs to the purine/pyrimidine phosphoribosyltransferase family. PyrE subfamily.</text>
</comment>
<dbReference type="EC" id="2.4.2.10" evidence="1"/>
<dbReference type="EMBL" id="CP000419">
    <property type="protein sequence ID" value="ABJ66197.1"/>
    <property type="molecule type" value="Genomic_DNA"/>
</dbReference>
<dbReference type="RefSeq" id="WP_011681117.1">
    <property type="nucleotide sequence ID" value="NZ_CP086001.1"/>
</dbReference>
<dbReference type="SMR" id="Q03KS5"/>
<dbReference type="KEGG" id="ste:STER_0981"/>
<dbReference type="HOGENOM" id="CLU_074878_1_1_9"/>
<dbReference type="UniPathway" id="UPA00070">
    <property type="reaction ID" value="UER00119"/>
</dbReference>
<dbReference type="GO" id="GO:0000287">
    <property type="term" value="F:magnesium ion binding"/>
    <property type="evidence" value="ECO:0007669"/>
    <property type="project" value="UniProtKB-UniRule"/>
</dbReference>
<dbReference type="GO" id="GO:0004588">
    <property type="term" value="F:orotate phosphoribosyltransferase activity"/>
    <property type="evidence" value="ECO:0007669"/>
    <property type="project" value="UniProtKB-UniRule"/>
</dbReference>
<dbReference type="GO" id="GO:0044205">
    <property type="term" value="P:'de novo' UMP biosynthetic process"/>
    <property type="evidence" value="ECO:0007669"/>
    <property type="project" value="UniProtKB-UniRule"/>
</dbReference>
<dbReference type="GO" id="GO:0019856">
    <property type="term" value="P:pyrimidine nucleobase biosynthetic process"/>
    <property type="evidence" value="ECO:0007669"/>
    <property type="project" value="TreeGrafter"/>
</dbReference>
<dbReference type="CDD" id="cd06223">
    <property type="entry name" value="PRTases_typeI"/>
    <property type="match status" value="1"/>
</dbReference>
<dbReference type="Gene3D" id="3.40.50.2020">
    <property type="match status" value="1"/>
</dbReference>
<dbReference type="HAMAP" id="MF_01208">
    <property type="entry name" value="PyrE"/>
    <property type="match status" value="1"/>
</dbReference>
<dbReference type="InterPro" id="IPR023031">
    <property type="entry name" value="OPRT"/>
</dbReference>
<dbReference type="InterPro" id="IPR004467">
    <property type="entry name" value="Or_phspho_trans_dom"/>
</dbReference>
<dbReference type="InterPro" id="IPR000836">
    <property type="entry name" value="PRibTrfase_dom"/>
</dbReference>
<dbReference type="InterPro" id="IPR029057">
    <property type="entry name" value="PRTase-like"/>
</dbReference>
<dbReference type="NCBIfam" id="TIGR00336">
    <property type="entry name" value="pyrE"/>
    <property type="match status" value="1"/>
</dbReference>
<dbReference type="PANTHER" id="PTHR19278">
    <property type="entry name" value="OROTATE PHOSPHORIBOSYLTRANSFERASE"/>
    <property type="match status" value="1"/>
</dbReference>
<dbReference type="PANTHER" id="PTHR19278:SF9">
    <property type="entry name" value="URIDINE 5'-MONOPHOSPHATE SYNTHASE"/>
    <property type="match status" value="1"/>
</dbReference>
<dbReference type="Pfam" id="PF00156">
    <property type="entry name" value="Pribosyltran"/>
    <property type="match status" value="1"/>
</dbReference>
<dbReference type="SUPFAM" id="SSF53271">
    <property type="entry name" value="PRTase-like"/>
    <property type="match status" value="1"/>
</dbReference>
<dbReference type="PROSITE" id="PS00103">
    <property type="entry name" value="PUR_PYR_PR_TRANSFER"/>
    <property type="match status" value="1"/>
</dbReference>
<evidence type="ECO:0000255" key="1">
    <source>
        <dbReference type="HAMAP-Rule" id="MF_01208"/>
    </source>
</evidence>
<keyword id="KW-0328">Glycosyltransferase</keyword>
<keyword id="KW-0460">Magnesium</keyword>
<keyword id="KW-0665">Pyrimidine biosynthesis</keyword>
<keyword id="KW-0808">Transferase</keyword>
<proteinExistence type="inferred from homology"/>
<protein>
    <recommendedName>
        <fullName evidence="1">Orotate phosphoribosyltransferase</fullName>
        <shortName evidence="1">OPRT</shortName>
        <shortName evidence="1">OPRTase</shortName>
        <ecNumber evidence="1">2.4.2.10</ecNumber>
    </recommendedName>
</protein>
<feature type="chain" id="PRO_1000066316" description="Orotate phosphoribosyltransferase">
    <location>
        <begin position="1"/>
        <end position="209"/>
    </location>
</feature>
<feature type="binding site" evidence="1">
    <location>
        <position position="96"/>
    </location>
    <ligand>
        <name>5-phospho-alpha-D-ribose 1-diphosphate</name>
        <dbReference type="ChEBI" id="CHEBI:58017"/>
        <note>ligand shared between dimeric partners</note>
    </ligand>
</feature>
<feature type="binding site" evidence="1">
    <location>
        <position position="100"/>
    </location>
    <ligand>
        <name>5-phospho-alpha-D-ribose 1-diphosphate</name>
        <dbReference type="ChEBI" id="CHEBI:58017"/>
        <note>ligand shared between dimeric partners</note>
    </ligand>
</feature>
<feature type="binding site" evidence="1">
    <location>
        <position position="102"/>
    </location>
    <ligand>
        <name>5-phospho-alpha-D-ribose 1-diphosphate</name>
        <dbReference type="ChEBI" id="CHEBI:58017"/>
        <note>ligand shared between dimeric partners</note>
    </ligand>
</feature>
<feature type="binding site" description="in other chain" evidence="1">
    <location>
        <begin position="122"/>
        <end position="130"/>
    </location>
    <ligand>
        <name>5-phospho-alpha-D-ribose 1-diphosphate</name>
        <dbReference type="ChEBI" id="CHEBI:58017"/>
        <note>ligand shared between dimeric partners</note>
    </ligand>
</feature>
<feature type="binding site" evidence="1">
    <location>
        <position position="126"/>
    </location>
    <ligand>
        <name>orotate</name>
        <dbReference type="ChEBI" id="CHEBI:30839"/>
    </ligand>
</feature>
<gene>
    <name evidence="1" type="primary">pyrE</name>
    <name type="ordered locus">STER_0981</name>
</gene>
<sequence>MTLASQIASDLLDIKAVYLKPEEPFTWASGIKSPIYTDNRITLSYPETRTLIENGFVKKIKEEFPEVEVIAGTATAGIPHGAIIADKMNLPFAYIRSKPKDHGAGNQIEGRVVKGEKMVVVEDLISTGGSVLDAVAAAEREGADVIGVVAIFTYELPKAEKNFAEAGVKLVTLSNYTELIKVAKVKGYITADGLQLLKKFKENQETWQD</sequence>
<organism>
    <name type="scientific">Streptococcus thermophilus (strain ATCC BAA-491 / LMD-9)</name>
    <dbReference type="NCBI Taxonomy" id="322159"/>
    <lineage>
        <taxon>Bacteria</taxon>
        <taxon>Bacillati</taxon>
        <taxon>Bacillota</taxon>
        <taxon>Bacilli</taxon>
        <taxon>Lactobacillales</taxon>
        <taxon>Streptococcaceae</taxon>
        <taxon>Streptococcus</taxon>
    </lineage>
</organism>
<reference key="1">
    <citation type="journal article" date="2006" name="Proc. Natl. Acad. Sci. U.S.A.">
        <title>Comparative genomics of the lactic acid bacteria.</title>
        <authorList>
            <person name="Makarova K.S."/>
            <person name="Slesarev A."/>
            <person name="Wolf Y.I."/>
            <person name="Sorokin A."/>
            <person name="Mirkin B."/>
            <person name="Koonin E.V."/>
            <person name="Pavlov A."/>
            <person name="Pavlova N."/>
            <person name="Karamychev V."/>
            <person name="Polouchine N."/>
            <person name="Shakhova V."/>
            <person name="Grigoriev I."/>
            <person name="Lou Y."/>
            <person name="Rohksar D."/>
            <person name="Lucas S."/>
            <person name="Huang K."/>
            <person name="Goodstein D.M."/>
            <person name="Hawkins T."/>
            <person name="Plengvidhya V."/>
            <person name="Welker D."/>
            <person name="Hughes J."/>
            <person name="Goh Y."/>
            <person name="Benson A."/>
            <person name="Baldwin K."/>
            <person name="Lee J.-H."/>
            <person name="Diaz-Muniz I."/>
            <person name="Dosti B."/>
            <person name="Smeianov V."/>
            <person name="Wechter W."/>
            <person name="Barabote R."/>
            <person name="Lorca G."/>
            <person name="Altermann E."/>
            <person name="Barrangou R."/>
            <person name="Ganesan B."/>
            <person name="Xie Y."/>
            <person name="Rawsthorne H."/>
            <person name="Tamir D."/>
            <person name="Parker C."/>
            <person name="Breidt F."/>
            <person name="Broadbent J.R."/>
            <person name="Hutkins R."/>
            <person name="O'Sullivan D."/>
            <person name="Steele J."/>
            <person name="Unlu G."/>
            <person name="Saier M.H. Jr."/>
            <person name="Klaenhammer T."/>
            <person name="Richardson P."/>
            <person name="Kozyavkin S."/>
            <person name="Weimer B.C."/>
            <person name="Mills D.A."/>
        </authorList>
    </citation>
    <scope>NUCLEOTIDE SEQUENCE [LARGE SCALE GENOMIC DNA]</scope>
    <source>
        <strain>ATCC BAA-491 / LMD-9</strain>
    </source>
</reference>
<name>PYRE_STRTD</name>